<sequence>MRRRRAEVRKIAPDPVYSDILVAKLVNRIMWDGKKAVAQKIVYRSFEYIQEKSGKDPLEVFQKAIENVRPVLEVRPRRVGGATYQVPVEVQEPRKTSLALRWIVAAARAKKGKPMYVRLAEEILASYQGTGTAMKKKEDVHKMAEANRAFAHLRW</sequence>
<reference key="1">
    <citation type="submission" date="2007-08" db="EMBL/GenBank/DDBJ databases">
        <title>Complete sequence of Thermotoga lettingae TMO.</title>
        <authorList>
            <consortium name="US DOE Joint Genome Institute"/>
            <person name="Copeland A."/>
            <person name="Lucas S."/>
            <person name="Lapidus A."/>
            <person name="Barry K."/>
            <person name="Glavina del Rio T."/>
            <person name="Dalin E."/>
            <person name="Tice H."/>
            <person name="Pitluck S."/>
            <person name="Foster B."/>
            <person name="Bruce D."/>
            <person name="Schmutz J."/>
            <person name="Larimer F."/>
            <person name="Land M."/>
            <person name="Hauser L."/>
            <person name="Kyrpides N."/>
            <person name="Mikhailova N."/>
            <person name="Nelson K."/>
            <person name="Gogarten J.P."/>
            <person name="Noll K."/>
            <person name="Richardson P."/>
        </authorList>
    </citation>
    <scope>NUCLEOTIDE SEQUENCE [LARGE SCALE GENOMIC DNA]</scope>
    <source>
        <strain>ATCC BAA-301 / DSM 14385 / NBRC 107922 / TMO</strain>
    </source>
</reference>
<accession>A8F4Q7</accession>
<comment type="function">
    <text evidence="1">One of the primary rRNA binding proteins, it binds directly to 16S rRNA where it nucleates assembly of the head domain of the 30S subunit. Is located at the subunit interface close to the decoding center, probably blocks exit of the E-site tRNA.</text>
</comment>
<comment type="subunit">
    <text evidence="1">Part of the 30S ribosomal subunit. Contacts proteins S9 and S11.</text>
</comment>
<comment type="similarity">
    <text evidence="1">Belongs to the universal ribosomal protein uS7 family.</text>
</comment>
<name>RS7_PSELT</name>
<keyword id="KW-1185">Reference proteome</keyword>
<keyword id="KW-0687">Ribonucleoprotein</keyword>
<keyword id="KW-0689">Ribosomal protein</keyword>
<keyword id="KW-0694">RNA-binding</keyword>
<keyword id="KW-0699">rRNA-binding</keyword>
<keyword id="KW-0820">tRNA-binding</keyword>
<organism>
    <name type="scientific">Pseudothermotoga lettingae (strain ATCC BAA-301 / DSM 14385 / NBRC 107922 / TMO)</name>
    <name type="common">Thermotoga lettingae</name>
    <dbReference type="NCBI Taxonomy" id="416591"/>
    <lineage>
        <taxon>Bacteria</taxon>
        <taxon>Thermotogati</taxon>
        <taxon>Thermotogota</taxon>
        <taxon>Thermotogae</taxon>
        <taxon>Thermotogales</taxon>
        <taxon>Thermotogaceae</taxon>
        <taxon>Pseudothermotoga</taxon>
    </lineage>
</organism>
<feature type="chain" id="PRO_1000060423" description="Small ribosomal subunit protein uS7">
    <location>
        <begin position="1"/>
        <end position="155"/>
    </location>
</feature>
<dbReference type="EMBL" id="CP000812">
    <property type="protein sequence ID" value="ABV33141.1"/>
    <property type="molecule type" value="Genomic_DNA"/>
</dbReference>
<dbReference type="RefSeq" id="WP_012002622.1">
    <property type="nucleotide sequence ID" value="NZ_BSDV01000001.1"/>
</dbReference>
<dbReference type="SMR" id="A8F4Q7"/>
<dbReference type="STRING" id="416591.Tlet_0575"/>
<dbReference type="KEGG" id="tle:Tlet_0575"/>
<dbReference type="eggNOG" id="COG0049">
    <property type="taxonomic scope" value="Bacteria"/>
</dbReference>
<dbReference type="HOGENOM" id="CLU_072226_1_1_0"/>
<dbReference type="OrthoDB" id="9807653at2"/>
<dbReference type="Proteomes" id="UP000002016">
    <property type="component" value="Chromosome"/>
</dbReference>
<dbReference type="GO" id="GO:0015935">
    <property type="term" value="C:small ribosomal subunit"/>
    <property type="evidence" value="ECO:0007669"/>
    <property type="project" value="InterPro"/>
</dbReference>
<dbReference type="GO" id="GO:0019843">
    <property type="term" value="F:rRNA binding"/>
    <property type="evidence" value="ECO:0007669"/>
    <property type="project" value="UniProtKB-UniRule"/>
</dbReference>
<dbReference type="GO" id="GO:0003735">
    <property type="term" value="F:structural constituent of ribosome"/>
    <property type="evidence" value="ECO:0007669"/>
    <property type="project" value="InterPro"/>
</dbReference>
<dbReference type="GO" id="GO:0000049">
    <property type="term" value="F:tRNA binding"/>
    <property type="evidence" value="ECO:0007669"/>
    <property type="project" value="UniProtKB-UniRule"/>
</dbReference>
<dbReference type="GO" id="GO:0006412">
    <property type="term" value="P:translation"/>
    <property type="evidence" value="ECO:0007669"/>
    <property type="project" value="UniProtKB-UniRule"/>
</dbReference>
<dbReference type="CDD" id="cd14869">
    <property type="entry name" value="uS7_Bacteria"/>
    <property type="match status" value="1"/>
</dbReference>
<dbReference type="FunFam" id="1.10.455.10:FF:000001">
    <property type="entry name" value="30S ribosomal protein S7"/>
    <property type="match status" value="1"/>
</dbReference>
<dbReference type="Gene3D" id="1.10.455.10">
    <property type="entry name" value="Ribosomal protein S7 domain"/>
    <property type="match status" value="1"/>
</dbReference>
<dbReference type="HAMAP" id="MF_00480_B">
    <property type="entry name" value="Ribosomal_uS7_B"/>
    <property type="match status" value="1"/>
</dbReference>
<dbReference type="InterPro" id="IPR000235">
    <property type="entry name" value="Ribosomal_uS7"/>
</dbReference>
<dbReference type="InterPro" id="IPR005717">
    <property type="entry name" value="Ribosomal_uS7_bac/org-type"/>
</dbReference>
<dbReference type="InterPro" id="IPR020606">
    <property type="entry name" value="Ribosomal_uS7_CS"/>
</dbReference>
<dbReference type="InterPro" id="IPR023798">
    <property type="entry name" value="Ribosomal_uS7_dom"/>
</dbReference>
<dbReference type="InterPro" id="IPR036823">
    <property type="entry name" value="Ribosomal_uS7_dom_sf"/>
</dbReference>
<dbReference type="NCBIfam" id="TIGR01029">
    <property type="entry name" value="rpsG_bact"/>
    <property type="match status" value="1"/>
</dbReference>
<dbReference type="PANTHER" id="PTHR11205">
    <property type="entry name" value="RIBOSOMAL PROTEIN S7"/>
    <property type="match status" value="1"/>
</dbReference>
<dbReference type="Pfam" id="PF00177">
    <property type="entry name" value="Ribosomal_S7"/>
    <property type="match status" value="1"/>
</dbReference>
<dbReference type="PIRSF" id="PIRSF002122">
    <property type="entry name" value="RPS7p_RPS7a_RPS5e_RPS7o"/>
    <property type="match status" value="1"/>
</dbReference>
<dbReference type="SUPFAM" id="SSF47973">
    <property type="entry name" value="Ribosomal protein S7"/>
    <property type="match status" value="1"/>
</dbReference>
<dbReference type="PROSITE" id="PS00052">
    <property type="entry name" value="RIBOSOMAL_S7"/>
    <property type="match status" value="1"/>
</dbReference>
<gene>
    <name evidence="1" type="primary">rpsG</name>
    <name type="ordered locus">Tlet_0575</name>
</gene>
<evidence type="ECO:0000255" key="1">
    <source>
        <dbReference type="HAMAP-Rule" id="MF_00480"/>
    </source>
</evidence>
<evidence type="ECO:0000305" key="2"/>
<protein>
    <recommendedName>
        <fullName evidence="1">Small ribosomal subunit protein uS7</fullName>
    </recommendedName>
    <alternativeName>
        <fullName evidence="2">30S ribosomal protein S7</fullName>
    </alternativeName>
</protein>
<proteinExistence type="inferred from homology"/>